<organism>
    <name type="scientific">Pongo abelii</name>
    <name type="common">Sumatran orangutan</name>
    <name type="synonym">Pongo pygmaeus abelii</name>
    <dbReference type="NCBI Taxonomy" id="9601"/>
    <lineage>
        <taxon>Eukaryota</taxon>
        <taxon>Metazoa</taxon>
        <taxon>Chordata</taxon>
        <taxon>Craniata</taxon>
        <taxon>Vertebrata</taxon>
        <taxon>Euteleostomi</taxon>
        <taxon>Mammalia</taxon>
        <taxon>Eutheria</taxon>
        <taxon>Euarchontoglires</taxon>
        <taxon>Primates</taxon>
        <taxon>Haplorrhini</taxon>
        <taxon>Catarrhini</taxon>
        <taxon>Hominidae</taxon>
        <taxon>Pongo</taxon>
    </lineage>
</organism>
<comment type="function">
    <text evidence="4">Stress-activated kinase involved in tolerance to glucose starvation. Induces cell-cell detachment by increasing F-actin conversion to G-actin. Expression is induced by CD95 or TNF-alpha, via NF-kappa-B. Protects cells from CD95-mediated apoptosis and is required for the increased motility and invasiveness of CD95-activated tumor cells. Phosphorylates LATS1 and LATS2. Plays a key role in neural tube closure during embryonic development through LATS2 phosphorylation and regulation of the nuclear localization of YAP1 a critical downstream regulatory target in the Hippo signaling pathway.</text>
</comment>
<comment type="catalytic activity">
    <reaction evidence="4">
        <text>L-seryl-[protein] + ATP = O-phospho-L-seryl-[protein] + ADP + H(+)</text>
        <dbReference type="Rhea" id="RHEA:17989"/>
        <dbReference type="Rhea" id="RHEA-COMP:9863"/>
        <dbReference type="Rhea" id="RHEA-COMP:11604"/>
        <dbReference type="ChEBI" id="CHEBI:15378"/>
        <dbReference type="ChEBI" id="CHEBI:29999"/>
        <dbReference type="ChEBI" id="CHEBI:30616"/>
        <dbReference type="ChEBI" id="CHEBI:83421"/>
        <dbReference type="ChEBI" id="CHEBI:456216"/>
        <dbReference type="EC" id="2.7.11.1"/>
    </reaction>
</comment>
<comment type="catalytic activity">
    <reaction evidence="4">
        <text>L-threonyl-[protein] + ATP = O-phospho-L-threonyl-[protein] + ADP + H(+)</text>
        <dbReference type="Rhea" id="RHEA:46608"/>
        <dbReference type="Rhea" id="RHEA-COMP:11060"/>
        <dbReference type="Rhea" id="RHEA-COMP:11605"/>
        <dbReference type="ChEBI" id="CHEBI:15378"/>
        <dbReference type="ChEBI" id="CHEBI:30013"/>
        <dbReference type="ChEBI" id="CHEBI:30616"/>
        <dbReference type="ChEBI" id="CHEBI:61977"/>
        <dbReference type="ChEBI" id="CHEBI:456216"/>
        <dbReference type="EC" id="2.7.11.1"/>
    </reaction>
</comment>
<comment type="cofactor">
    <cofactor evidence="4">
        <name>Mg(2+)</name>
        <dbReference type="ChEBI" id="CHEBI:18420"/>
    </cofactor>
</comment>
<comment type="activity regulation">
    <text evidence="1">Activated by phosphorylation on Thr-208.</text>
</comment>
<comment type="PTM">
    <text evidence="4">Phosphorylated at Thr-208 by STK11/LKB1 in complex with STE20-related adapter-alpha (STRADA) pseudo kinase and CAB39. Autophosphorylation is also possible at Thr-208.</text>
</comment>
<comment type="similarity">
    <text evidence="8">Belongs to the protein kinase superfamily. CAMK Ser/Thr protein kinase family. SNF1 subfamily.</text>
</comment>
<sequence length="628" mass="69624">MESLVFARRSGPTPSAAELARPLAEGLIKSPKPLMKKQAVKRHHHKHNLRHRYEFLETLGKGTYGKVKKARESSGRLVAIKSIRKDKIKDEQDLMHIRREIEIMSSLNHPHIIAIHEVFENSSKIVIVMEYASRGDLYDYISERQQLSEREARHFFRQIVSAVHYCHQNRVVHRDLKLENILLDANGNIKIADFGLSNLYHQGKFLQTFCGSPLYASPEIVNGKPYTGPEVDSWSLGVLLYILVHGTMPFDGHDHKILVKQISNGAYREPPKPSDACGLIRWLLMVNPTRRATLEDVASHWWVNWGYATRVGEQEAPHEGGHPGSDSARASMADWLRRSSRPLLENGAKVCSFFKQHAPGGGSTTPGLERQHSLKKSRKENDMAQSLHSDTADDTAHRPGKSNLKLPKGILKKKVSASAEGAQEDPPELSPIPVSPGQAAPPLPKKGILKKPRQRESGYYSSPEPSESGELLDVGDVFVSGDPKEQKPPQASGLLLHRKGILKLNGKFSQTALELAAPTTFGSLDELAPPRPLARASRPSGAVSEDSILSSESFDQLDLPERLPEPPLRGCVSVDNLTGLEEPPSEGPGSCLRRWRQDPLGDSCFSLTDCQEVTATYRQALRVCSKLT</sequence>
<evidence type="ECO:0000250" key="1"/>
<evidence type="ECO:0000250" key="2">
    <source>
        <dbReference type="UniProtKB" id="O60285"/>
    </source>
</evidence>
<evidence type="ECO:0000250" key="3">
    <source>
        <dbReference type="UniProtKB" id="Q8BZN4"/>
    </source>
</evidence>
<evidence type="ECO:0000250" key="4">
    <source>
        <dbReference type="UniProtKB" id="Q9H093"/>
    </source>
</evidence>
<evidence type="ECO:0000255" key="5">
    <source>
        <dbReference type="PROSITE-ProRule" id="PRU00159"/>
    </source>
</evidence>
<evidence type="ECO:0000255" key="6">
    <source>
        <dbReference type="PROSITE-ProRule" id="PRU10027"/>
    </source>
</evidence>
<evidence type="ECO:0000256" key="7">
    <source>
        <dbReference type="SAM" id="MobiDB-lite"/>
    </source>
</evidence>
<evidence type="ECO:0000305" key="8"/>
<evidence type="ECO:0000312" key="9">
    <source>
        <dbReference type="EMBL" id="CAH92291.1"/>
    </source>
</evidence>
<keyword id="KW-0007">Acetylation</keyword>
<keyword id="KW-0053">Apoptosis</keyword>
<keyword id="KW-0067">ATP-binding</keyword>
<keyword id="KW-0418">Kinase</keyword>
<keyword id="KW-0460">Magnesium</keyword>
<keyword id="KW-0479">Metal-binding</keyword>
<keyword id="KW-0547">Nucleotide-binding</keyword>
<keyword id="KW-0597">Phosphoprotein</keyword>
<keyword id="KW-1185">Reference proteome</keyword>
<keyword id="KW-0723">Serine/threonine-protein kinase</keyword>
<keyword id="KW-0808">Transferase</keyword>
<proteinExistence type="evidence at transcript level"/>
<feature type="chain" id="PRO_0000247758" description="NUAK family SNF1-like kinase 2">
    <location>
        <begin position="1"/>
        <end position="628"/>
    </location>
</feature>
<feature type="domain" description="Protein kinase" evidence="5">
    <location>
        <begin position="53"/>
        <end position="303"/>
    </location>
</feature>
<feature type="region of interest" description="Disordered" evidence="7">
    <location>
        <begin position="355"/>
        <end position="492"/>
    </location>
</feature>
<feature type="region of interest" description="Disordered" evidence="7">
    <location>
        <begin position="522"/>
        <end position="570"/>
    </location>
</feature>
<feature type="compositionally biased region" description="Pro residues" evidence="7">
    <location>
        <begin position="428"/>
        <end position="444"/>
    </location>
</feature>
<feature type="compositionally biased region" description="Low complexity" evidence="7">
    <location>
        <begin position="457"/>
        <end position="469"/>
    </location>
</feature>
<feature type="active site" description="Proton acceptor" evidence="2 5 6">
    <location>
        <position position="175"/>
    </location>
</feature>
<feature type="binding site" evidence="2 5">
    <location>
        <begin position="59"/>
        <end position="67"/>
    </location>
    <ligand>
        <name>ATP</name>
        <dbReference type="ChEBI" id="CHEBI:30616"/>
    </ligand>
</feature>
<feature type="binding site" evidence="4 5">
    <location>
        <position position="81"/>
    </location>
    <ligand>
        <name>ATP</name>
        <dbReference type="ChEBI" id="CHEBI:30616"/>
    </ligand>
</feature>
<feature type="modified residue" description="N-acetylmethionine" evidence="4">
    <location>
        <position position="1"/>
    </location>
</feature>
<feature type="modified residue" description="Phosphothreonine" evidence="4">
    <location>
        <position position="208"/>
    </location>
</feature>
<feature type="modified residue" description="Phosphoserine" evidence="4">
    <location>
        <position position="435"/>
    </location>
</feature>
<feature type="modified residue" description="Phosphoserine" evidence="4">
    <location>
        <position position="523"/>
    </location>
</feature>
<feature type="modified residue" description="Phosphoserine" evidence="4">
    <location>
        <position position="544"/>
    </location>
</feature>
<feature type="modified residue" description="Phosphoserine" evidence="4">
    <location>
        <position position="547"/>
    </location>
</feature>
<feature type="modified residue" description="Phosphoserine" evidence="3">
    <location>
        <position position="573"/>
    </location>
</feature>
<reference evidence="8 9" key="1">
    <citation type="submission" date="2004-11" db="EMBL/GenBank/DDBJ databases">
        <authorList>
            <consortium name="The German cDNA consortium"/>
        </authorList>
    </citation>
    <scope>NUCLEOTIDE SEQUENCE [LARGE SCALE MRNA]</scope>
    <source>
        <tissue evidence="9">Kidney</tissue>
    </source>
</reference>
<gene>
    <name evidence="4" type="primary">NUAK2</name>
</gene>
<accession>Q5R7G9</accession>
<dbReference type="EC" id="2.7.11.1"/>
<dbReference type="EMBL" id="CR860148">
    <property type="protein sequence ID" value="CAH92291.1"/>
    <property type="molecule type" value="mRNA"/>
</dbReference>
<dbReference type="RefSeq" id="NP_001126340.1">
    <property type="nucleotide sequence ID" value="NM_001132868.2"/>
</dbReference>
<dbReference type="SMR" id="Q5R7G9"/>
<dbReference type="FunCoup" id="Q5R7G9">
    <property type="interactions" value="111"/>
</dbReference>
<dbReference type="STRING" id="9601.ENSPPYP00000000331"/>
<dbReference type="Ensembl" id="ENSPPYT00000000348.3">
    <property type="protein sequence ID" value="ENSPPYP00000000331.2"/>
    <property type="gene ID" value="ENSPPYG00000000307.3"/>
</dbReference>
<dbReference type="GeneID" id="100173321"/>
<dbReference type="KEGG" id="pon:100173321"/>
<dbReference type="CTD" id="81788"/>
<dbReference type="eggNOG" id="KOG0611">
    <property type="taxonomic scope" value="Eukaryota"/>
</dbReference>
<dbReference type="GeneTree" id="ENSGT00940000158422"/>
<dbReference type="HOGENOM" id="CLU_000288_63_42_1"/>
<dbReference type="InParanoid" id="Q5R7G9"/>
<dbReference type="OMA" id="RPLMKKQ"/>
<dbReference type="OrthoDB" id="193931at2759"/>
<dbReference type="TreeFam" id="TF324572"/>
<dbReference type="Proteomes" id="UP000001595">
    <property type="component" value="Chromosome 1"/>
</dbReference>
<dbReference type="GO" id="GO:0005737">
    <property type="term" value="C:cytoplasm"/>
    <property type="evidence" value="ECO:0007669"/>
    <property type="project" value="TreeGrafter"/>
</dbReference>
<dbReference type="GO" id="GO:0005524">
    <property type="term" value="F:ATP binding"/>
    <property type="evidence" value="ECO:0000250"/>
    <property type="project" value="UniProtKB"/>
</dbReference>
<dbReference type="GO" id="GO:0000287">
    <property type="term" value="F:magnesium ion binding"/>
    <property type="evidence" value="ECO:0000250"/>
    <property type="project" value="UniProtKB"/>
</dbReference>
<dbReference type="GO" id="GO:0106310">
    <property type="term" value="F:protein serine kinase activity"/>
    <property type="evidence" value="ECO:0007669"/>
    <property type="project" value="RHEA"/>
</dbReference>
<dbReference type="GO" id="GO:0004674">
    <property type="term" value="F:protein serine/threonine kinase activity"/>
    <property type="evidence" value="ECO:0000250"/>
    <property type="project" value="UniProtKB"/>
</dbReference>
<dbReference type="GO" id="GO:0030036">
    <property type="term" value="P:actin cytoskeleton organization"/>
    <property type="evidence" value="ECO:0000250"/>
    <property type="project" value="UniProtKB"/>
</dbReference>
<dbReference type="GO" id="GO:0006915">
    <property type="term" value="P:apoptotic process"/>
    <property type="evidence" value="ECO:0007669"/>
    <property type="project" value="UniProtKB-KW"/>
</dbReference>
<dbReference type="GO" id="GO:0042149">
    <property type="term" value="P:cellular response to glucose starvation"/>
    <property type="evidence" value="ECO:0000250"/>
    <property type="project" value="UniProtKB"/>
</dbReference>
<dbReference type="GO" id="GO:0035556">
    <property type="term" value="P:intracellular signal transduction"/>
    <property type="evidence" value="ECO:0007669"/>
    <property type="project" value="TreeGrafter"/>
</dbReference>
<dbReference type="GO" id="GO:0000226">
    <property type="term" value="P:microtubule cytoskeleton organization"/>
    <property type="evidence" value="ECO:0007669"/>
    <property type="project" value="TreeGrafter"/>
</dbReference>
<dbReference type="GO" id="GO:0043066">
    <property type="term" value="P:negative regulation of apoptotic process"/>
    <property type="evidence" value="ECO:0000250"/>
    <property type="project" value="UniProtKB"/>
</dbReference>
<dbReference type="GO" id="GO:0034504">
    <property type="term" value="P:protein localization to nucleus"/>
    <property type="evidence" value="ECO:0000250"/>
    <property type="project" value="UniProtKB"/>
</dbReference>
<dbReference type="GO" id="GO:0006468">
    <property type="term" value="P:protein phosphorylation"/>
    <property type="evidence" value="ECO:0000250"/>
    <property type="project" value="UniProtKB"/>
</dbReference>
<dbReference type="GO" id="GO:0035330">
    <property type="term" value="P:regulation of hippo signaling"/>
    <property type="evidence" value="ECO:0000250"/>
    <property type="project" value="UniProtKB"/>
</dbReference>
<dbReference type="CDD" id="cd14161">
    <property type="entry name" value="STKc_NUAK2"/>
    <property type="match status" value="1"/>
</dbReference>
<dbReference type="FunFam" id="3.30.200.20:FF:000042">
    <property type="entry name" value="Aurora kinase A"/>
    <property type="match status" value="1"/>
</dbReference>
<dbReference type="FunFam" id="1.10.510.10:FF:000226">
    <property type="entry name" value="NUAK family SNF1-like kinase 1"/>
    <property type="match status" value="1"/>
</dbReference>
<dbReference type="Gene3D" id="1.10.510.10">
    <property type="entry name" value="Transferase(Phosphotransferase) domain 1"/>
    <property type="match status" value="1"/>
</dbReference>
<dbReference type="InterPro" id="IPR011009">
    <property type="entry name" value="Kinase-like_dom_sf"/>
</dbReference>
<dbReference type="InterPro" id="IPR000719">
    <property type="entry name" value="Prot_kinase_dom"/>
</dbReference>
<dbReference type="InterPro" id="IPR017441">
    <property type="entry name" value="Protein_kinase_ATP_BS"/>
</dbReference>
<dbReference type="InterPro" id="IPR008271">
    <property type="entry name" value="Ser/Thr_kinase_AS"/>
</dbReference>
<dbReference type="PANTHER" id="PTHR24346">
    <property type="entry name" value="MAP/MICROTUBULE AFFINITY-REGULATING KINASE"/>
    <property type="match status" value="1"/>
</dbReference>
<dbReference type="PANTHER" id="PTHR24346:SF93">
    <property type="entry name" value="NUAK FAMILY SNF1-LIKE KINASE 1"/>
    <property type="match status" value="1"/>
</dbReference>
<dbReference type="Pfam" id="PF00069">
    <property type="entry name" value="Pkinase"/>
    <property type="match status" value="1"/>
</dbReference>
<dbReference type="SMART" id="SM00220">
    <property type="entry name" value="S_TKc"/>
    <property type="match status" value="1"/>
</dbReference>
<dbReference type="SUPFAM" id="SSF56112">
    <property type="entry name" value="Protein kinase-like (PK-like)"/>
    <property type="match status" value="1"/>
</dbReference>
<dbReference type="PROSITE" id="PS00107">
    <property type="entry name" value="PROTEIN_KINASE_ATP"/>
    <property type="match status" value="1"/>
</dbReference>
<dbReference type="PROSITE" id="PS50011">
    <property type="entry name" value="PROTEIN_KINASE_DOM"/>
    <property type="match status" value="1"/>
</dbReference>
<dbReference type="PROSITE" id="PS00108">
    <property type="entry name" value="PROTEIN_KINASE_ST"/>
    <property type="match status" value="1"/>
</dbReference>
<name>NUAK2_PONAB</name>
<protein>
    <recommendedName>
        <fullName>NUAK family SNF1-like kinase 2</fullName>
        <ecNumber>2.7.11.1</ecNumber>
    </recommendedName>
</protein>